<sequence length="364" mass="39586">MRVLVSGGGTGGHIYPALALIREIKKLNPEARFLYIGTENGLESTIVPKAGIPFQSIVISGFKRKISLDNVKTVMRFLKGVQDSKRYIRRFNPDIVIGTGGYVCGPVVYAAAKLGIPTIVHEQNSVPGVTNKFLSRYVDKVAVCFEAAAEHFPQSKVVMTGNPRASEVMDQNGMKGKRSVGLSLPKKSVLIFGGSRGARPINDAFVEAIEQFGNKSYEILYVTGEVHYDKVMDAVKQKGNPNNVIIKPFIHNMPEVLTGVDLVVSRAGATTLAELTALGKPSVLIPSPYVTNNHQEKNARSVVDKGAAKMLLEKDLTAETLIRDIDEILLDAQTLQNMKLAAGQLGIPDAANKLYEVMNKLVKK</sequence>
<dbReference type="EC" id="2.4.1.227" evidence="1"/>
<dbReference type="EMBL" id="AE017194">
    <property type="protein sequence ID" value="AAS42859.1"/>
    <property type="molecule type" value="Genomic_DNA"/>
</dbReference>
<dbReference type="SMR" id="Q732F8"/>
<dbReference type="CAZy" id="GT28">
    <property type="family name" value="Glycosyltransferase Family 28"/>
</dbReference>
<dbReference type="KEGG" id="bca:BCE_3956"/>
<dbReference type="HOGENOM" id="CLU_037404_0_1_9"/>
<dbReference type="UniPathway" id="UPA00219"/>
<dbReference type="Proteomes" id="UP000002527">
    <property type="component" value="Chromosome"/>
</dbReference>
<dbReference type="GO" id="GO:0005886">
    <property type="term" value="C:plasma membrane"/>
    <property type="evidence" value="ECO:0007669"/>
    <property type="project" value="UniProtKB-SubCell"/>
</dbReference>
<dbReference type="GO" id="GO:0051991">
    <property type="term" value="F:UDP-N-acetyl-D-glucosamine:N-acetylmuramoyl-L-alanyl-D-glutamyl-meso-2,6-diaminopimelyl-D-alanyl-D-alanine-diphosphoundecaprenol 4-beta-N-acetylglucosaminlytransferase activity"/>
    <property type="evidence" value="ECO:0007669"/>
    <property type="project" value="RHEA"/>
</dbReference>
<dbReference type="GO" id="GO:0050511">
    <property type="term" value="F:undecaprenyldiphospho-muramoylpentapeptide beta-N-acetylglucosaminyltransferase activity"/>
    <property type="evidence" value="ECO:0007669"/>
    <property type="project" value="UniProtKB-UniRule"/>
</dbReference>
<dbReference type="GO" id="GO:0005975">
    <property type="term" value="P:carbohydrate metabolic process"/>
    <property type="evidence" value="ECO:0007669"/>
    <property type="project" value="InterPro"/>
</dbReference>
<dbReference type="GO" id="GO:0051301">
    <property type="term" value="P:cell division"/>
    <property type="evidence" value="ECO:0007669"/>
    <property type="project" value="UniProtKB-KW"/>
</dbReference>
<dbReference type="GO" id="GO:0071555">
    <property type="term" value="P:cell wall organization"/>
    <property type="evidence" value="ECO:0007669"/>
    <property type="project" value="UniProtKB-KW"/>
</dbReference>
<dbReference type="GO" id="GO:0030259">
    <property type="term" value="P:lipid glycosylation"/>
    <property type="evidence" value="ECO:0007669"/>
    <property type="project" value="UniProtKB-UniRule"/>
</dbReference>
<dbReference type="GO" id="GO:0009252">
    <property type="term" value="P:peptidoglycan biosynthetic process"/>
    <property type="evidence" value="ECO:0007669"/>
    <property type="project" value="UniProtKB-UniRule"/>
</dbReference>
<dbReference type="GO" id="GO:0008360">
    <property type="term" value="P:regulation of cell shape"/>
    <property type="evidence" value="ECO:0007669"/>
    <property type="project" value="UniProtKB-KW"/>
</dbReference>
<dbReference type="CDD" id="cd03785">
    <property type="entry name" value="GT28_MurG"/>
    <property type="match status" value="1"/>
</dbReference>
<dbReference type="Gene3D" id="3.40.50.2000">
    <property type="entry name" value="Glycogen Phosphorylase B"/>
    <property type="match status" value="2"/>
</dbReference>
<dbReference type="HAMAP" id="MF_00033">
    <property type="entry name" value="MurG"/>
    <property type="match status" value="1"/>
</dbReference>
<dbReference type="InterPro" id="IPR006009">
    <property type="entry name" value="GlcNAc_MurG"/>
</dbReference>
<dbReference type="InterPro" id="IPR007235">
    <property type="entry name" value="Glyco_trans_28_C"/>
</dbReference>
<dbReference type="InterPro" id="IPR004276">
    <property type="entry name" value="GlycoTrans_28_N"/>
</dbReference>
<dbReference type="NCBIfam" id="TIGR01133">
    <property type="entry name" value="murG"/>
    <property type="match status" value="1"/>
</dbReference>
<dbReference type="PANTHER" id="PTHR21015:SF22">
    <property type="entry name" value="GLYCOSYLTRANSFERASE"/>
    <property type="match status" value="1"/>
</dbReference>
<dbReference type="PANTHER" id="PTHR21015">
    <property type="entry name" value="UDP-N-ACETYLGLUCOSAMINE--N-ACETYLMURAMYL-(PENTAPEPTIDE) PYROPHOSPHORYL-UNDECAPRENOL N-ACETYLGLUCOSAMINE TRANSFERASE 1"/>
    <property type="match status" value="1"/>
</dbReference>
<dbReference type="Pfam" id="PF04101">
    <property type="entry name" value="Glyco_tran_28_C"/>
    <property type="match status" value="1"/>
</dbReference>
<dbReference type="Pfam" id="PF03033">
    <property type="entry name" value="Glyco_transf_28"/>
    <property type="match status" value="1"/>
</dbReference>
<dbReference type="SUPFAM" id="SSF53756">
    <property type="entry name" value="UDP-Glycosyltransferase/glycogen phosphorylase"/>
    <property type="match status" value="1"/>
</dbReference>
<feature type="chain" id="PRO_0000225021" description="UDP-N-acetylglucosamine--N-acetylmuramyl-(pentapeptide) pyrophosphoryl-undecaprenol N-acetylglucosamine transferase 1">
    <location>
        <begin position="1"/>
        <end position="364"/>
    </location>
</feature>
<feature type="binding site" evidence="1">
    <location>
        <begin position="10"/>
        <end position="12"/>
    </location>
    <ligand>
        <name>UDP-N-acetyl-alpha-D-glucosamine</name>
        <dbReference type="ChEBI" id="CHEBI:57705"/>
    </ligand>
</feature>
<feature type="binding site" evidence="1">
    <location>
        <position position="124"/>
    </location>
    <ligand>
        <name>UDP-N-acetyl-alpha-D-glucosamine</name>
        <dbReference type="ChEBI" id="CHEBI:57705"/>
    </ligand>
</feature>
<feature type="binding site" evidence="1">
    <location>
        <position position="195"/>
    </location>
    <ligand>
        <name>UDP-N-acetyl-alpha-D-glucosamine</name>
        <dbReference type="ChEBI" id="CHEBI:57705"/>
    </ligand>
</feature>
<feature type="binding site" evidence="1">
    <location>
        <position position="250"/>
    </location>
    <ligand>
        <name>UDP-N-acetyl-alpha-D-glucosamine</name>
        <dbReference type="ChEBI" id="CHEBI:57705"/>
    </ligand>
</feature>
<feature type="binding site" evidence="1">
    <location>
        <position position="295"/>
    </location>
    <ligand>
        <name>UDP-N-acetyl-alpha-D-glucosamine</name>
        <dbReference type="ChEBI" id="CHEBI:57705"/>
    </ligand>
</feature>
<protein>
    <recommendedName>
        <fullName evidence="1">UDP-N-acetylglucosamine--N-acetylmuramyl-(pentapeptide) pyrophosphoryl-undecaprenol N-acetylglucosamine transferase 1</fullName>
        <ecNumber evidence="1">2.4.1.227</ecNumber>
    </recommendedName>
    <alternativeName>
        <fullName evidence="1">Undecaprenyl-PP-MurNAc-pentapeptide-UDPGlcNAc GlcNAc transferase 1</fullName>
    </alternativeName>
</protein>
<gene>
    <name evidence="1" type="primary">murG1</name>
    <name type="ordered locus">BCE_3956</name>
</gene>
<organism>
    <name type="scientific">Bacillus cereus (strain ATCC 10987 / NRS 248)</name>
    <dbReference type="NCBI Taxonomy" id="222523"/>
    <lineage>
        <taxon>Bacteria</taxon>
        <taxon>Bacillati</taxon>
        <taxon>Bacillota</taxon>
        <taxon>Bacilli</taxon>
        <taxon>Bacillales</taxon>
        <taxon>Bacillaceae</taxon>
        <taxon>Bacillus</taxon>
        <taxon>Bacillus cereus group</taxon>
    </lineage>
</organism>
<accession>Q732F8</accession>
<name>MURG1_BACC1</name>
<keyword id="KW-0131">Cell cycle</keyword>
<keyword id="KW-0132">Cell division</keyword>
<keyword id="KW-1003">Cell membrane</keyword>
<keyword id="KW-0133">Cell shape</keyword>
<keyword id="KW-0961">Cell wall biogenesis/degradation</keyword>
<keyword id="KW-0328">Glycosyltransferase</keyword>
<keyword id="KW-0472">Membrane</keyword>
<keyword id="KW-0573">Peptidoglycan synthesis</keyword>
<keyword id="KW-0808">Transferase</keyword>
<evidence type="ECO:0000255" key="1">
    <source>
        <dbReference type="HAMAP-Rule" id="MF_00033"/>
    </source>
</evidence>
<reference key="1">
    <citation type="journal article" date="2004" name="Nucleic Acids Res.">
        <title>The genome sequence of Bacillus cereus ATCC 10987 reveals metabolic adaptations and a large plasmid related to Bacillus anthracis pXO1.</title>
        <authorList>
            <person name="Rasko D.A."/>
            <person name="Ravel J."/>
            <person name="Oekstad O.A."/>
            <person name="Helgason E."/>
            <person name="Cer R.Z."/>
            <person name="Jiang L."/>
            <person name="Shores K.A."/>
            <person name="Fouts D.E."/>
            <person name="Tourasse N.J."/>
            <person name="Angiuoli S.V."/>
            <person name="Kolonay J.F."/>
            <person name="Nelson W.C."/>
            <person name="Kolstoe A.-B."/>
            <person name="Fraser C.M."/>
            <person name="Read T.D."/>
        </authorList>
    </citation>
    <scope>NUCLEOTIDE SEQUENCE [LARGE SCALE GENOMIC DNA]</scope>
    <source>
        <strain>ATCC 10987 / NRS 248</strain>
    </source>
</reference>
<proteinExistence type="inferred from homology"/>
<comment type="function">
    <text evidence="1">Cell wall formation. Catalyzes the transfer of a GlcNAc subunit on undecaprenyl-pyrophosphoryl-MurNAc-pentapeptide (lipid intermediate I) to form undecaprenyl-pyrophosphoryl-MurNAc-(pentapeptide)GlcNAc (lipid intermediate II).</text>
</comment>
<comment type="catalytic activity">
    <reaction evidence="1">
        <text>di-trans,octa-cis-undecaprenyl diphospho-N-acetyl-alpha-D-muramoyl-L-alanyl-D-glutamyl-meso-2,6-diaminopimeloyl-D-alanyl-D-alanine + UDP-N-acetyl-alpha-D-glucosamine = di-trans,octa-cis-undecaprenyl diphospho-[N-acetyl-alpha-D-glucosaminyl-(1-&gt;4)]-N-acetyl-alpha-D-muramoyl-L-alanyl-D-glutamyl-meso-2,6-diaminopimeloyl-D-alanyl-D-alanine + UDP + H(+)</text>
        <dbReference type="Rhea" id="RHEA:31227"/>
        <dbReference type="ChEBI" id="CHEBI:15378"/>
        <dbReference type="ChEBI" id="CHEBI:57705"/>
        <dbReference type="ChEBI" id="CHEBI:58223"/>
        <dbReference type="ChEBI" id="CHEBI:61387"/>
        <dbReference type="ChEBI" id="CHEBI:61388"/>
        <dbReference type="EC" id="2.4.1.227"/>
    </reaction>
</comment>
<comment type="pathway">
    <text evidence="1">Cell wall biogenesis; peptidoglycan biosynthesis.</text>
</comment>
<comment type="subcellular location">
    <subcellularLocation>
        <location evidence="1">Cell membrane</location>
        <topology evidence="1">Peripheral membrane protein</topology>
        <orientation evidence="1">Cytoplasmic side</orientation>
    </subcellularLocation>
</comment>
<comment type="similarity">
    <text evidence="1">Belongs to the glycosyltransferase 28 family. MurG subfamily.</text>
</comment>